<keyword id="KW-1074">Activation of host NF-kappa-B by virus</keyword>
<keyword id="KW-0010">Activator</keyword>
<keyword id="KW-0053">Apoptosis</keyword>
<keyword id="KW-1035">Host cytoplasm</keyword>
<keyword id="KW-1079">Host G2/M cell cycle arrest by virus</keyword>
<keyword id="KW-1045">Host mitochondrion</keyword>
<keyword id="KW-1048">Host nucleus</keyword>
<keyword id="KW-0945">Host-virus interaction</keyword>
<keyword id="KW-1121">Modulation of host cell cycle by virus</keyword>
<keyword id="KW-1185">Reference proteome</keyword>
<keyword id="KW-0804">Transcription</keyword>
<keyword id="KW-0805">Transcription regulation</keyword>
<evidence type="ECO:0000255" key="1">
    <source>
        <dbReference type="HAMAP-Rule" id="MF_04074"/>
    </source>
</evidence>
<evidence type="ECO:0000256" key="2">
    <source>
        <dbReference type="SAM" id="MobiDB-lite"/>
    </source>
</evidence>
<name>X_HBVD4</name>
<organism>
    <name type="scientific">Hepatitis B virus genotype D subtype ayw (isolate Japan/JYW796/1988)</name>
    <name type="common">HBV-D</name>
    <dbReference type="NCBI Taxonomy" id="489487"/>
    <lineage>
        <taxon>Viruses</taxon>
        <taxon>Riboviria</taxon>
        <taxon>Pararnavirae</taxon>
        <taxon>Artverviricota</taxon>
        <taxon>Revtraviricetes</taxon>
        <taxon>Blubervirales</taxon>
        <taxon>Hepadnaviridae</taxon>
        <taxon>Orthohepadnavirus</taxon>
        <taxon>Hepatitis B virus</taxon>
        <taxon>hepatitis B virus genotype D</taxon>
    </lineage>
</organism>
<dbReference type="EMBL" id="AB033558">
    <property type="protein sequence ID" value="BAA85371.1"/>
    <property type="molecule type" value="Genomic_DNA"/>
</dbReference>
<dbReference type="Proteomes" id="UP000007931">
    <property type="component" value="Genome"/>
</dbReference>
<dbReference type="GO" id="GO:0033650">
    <property type="term" value="C:host cell mitochondrion"/>
    <property type="evidence" value="ECO:0007669"/>
    <property type="project" value="UniProtKB-SubCell"/>
</dbReference>
<dbReference type="GO" id="GO:0042025">
    <property type="term" value="C:host cell nucleus"/>
    <property type="evidence" value="ECO:0007669"/>
    <property type="project" value="UniProtKB-SubCell"/>
</dbReference>
<dbReference type="GO" id="GO:0006351">
    <property type="term" value="P:DNA-templated transcription"/>
    <property type="evidence" value="ECO:0007669"/>
    <property type="project" value="UniProtKB-UniRule"/>
</dbReference>
<dbReference type="GO" id="GO:0085033">
    <property type="term" value="P:symbiont-mediated activation of host NF-kappaB cascade"/>
    <property type="evidence" value="ECO:0007669"/>
    <property type="project" value="UniProtKB-UniRule"/>
</dbReference>
<dbReference type="GO" id="GO:0039592">
    <property type="term" value="P:symbiont-mediated arrest of host cell cycle during G2/M transition"/>
    <property type="evidence" value="ECO:0007669"/>
    <property type="project" value="UniProtKB-UniRule"/>
</dbReference>
<dbReference type="GO" id="GO:0019079">
    <property type="term" value="P:viral genome replication"/>
    <property type="evidence" value="ECO:0007669"/>
    <property type="project" value="UniProtKB-UniRule"/>
</dbReference>
<dbReference type="HAMAP" id="MF_04074">
    <property type="entry name" value="HBV_X"/>
    <property type="match status" value="1"/>
</dbReference>
<dbReference type="InterPro" id="IPR000236">
    <property type="entry name" value="Transactivation_prot_X"/>
</dbReference>
<dbReference type="Pfam" id="PF00739">
    <property type="entry name" value="X"/>
    <property type="match status" value="1"/>
</dbReference>
<gene>
    <name evidence="1" type="primary">X</name>
</gene>
<comment type="function">
    <text evidence="1">Multifunctional protein that plays a role in silencing host antiviral defenses and promoting viral transcription. Does not seem to be essential for HBV infection. May be directly involved in development of cirrhosis and liver cancer (hepatocellular carcinoma). Most of cytosolic activities involve modulation of cytosolic calcium. The effect on apoptosis is controversial depending on the cell types in which the studies have been conducted. May induce apoptosis by localizing in mitochondria and causing loss of mitochondrial membrane potential. May also modulate apoptosis by binding host CFLAR, a key regulator of the death-inducing signaling complex (DISC). Promotes viral transcription by using the host E3 ubiquitin ligase DDB1 to target the SMC5-SMC6 complex to proteasomal degradation. This host complex would otherwise bind to viral episomal DNA, and prevents its transcription. Moderately stimulates transcription of many different viral and cellular transcription elements. Promoters and enhancers stimulated by HBx contain DNA binding sites for NF-kappa-B, AP-1, AP-2, c-EBP, ATF/CREB, or the calcium-activated factor NF-AT.</text>
</comment>
<comment type="subunit">
    <text evidence="1">May form homodimer. May interact with host CEBPA, CFLAR, CREB1, DDB1, E4F1, HBXIP, HSPD1/HSP60, NFKBIA, POLR2E and SMAD4. Interacts with host SMC5-SMC6 complex and induces its degradation. Interacts with host TRPC4AP; leading to prevent ubiquitination of TRPC4AP. Interacts with host PLSCR1; this interaction promotes ubiquitination and degradation of HBx and impairs HBx-mediated cell proliferation.</text>
</comment>
<comment type="subcellular location">
    <subcellularLocation>
        <location evidence="1">Host cytoplasm</location>
    </subcellularLocation>
    <subcellularLocation>
        <location evidence="1">Host nucleus</location>
    </subcellularLocation>
    <subcellularLocation>
        <location evidence="1">Host mitochondrion</location>
    </subcellularLocation>
    <text evidence="1">Mainly cytoplasmic as only a fraction is detected in the nucleus. In cytoplasm, a minor fraction associates with mitochondria or proteasomes.</text>
</comment>
<comment type="PTM">
    <text evidence="1">A fraction may be phosphorylated in insect cells and HepG2 cells, a human hepatoblastoma cell line. Phosphorylated in vitro by host protein kinase C or mitogen-activated protein kinase. N-acetylated in insect cells.</text>
</comment>
<comment type="similarity">
    <text evidence="1">Belongs to the orthohepadnavirus protein X family.</text>
</comment>
<comment type="caution">
    <text>Transcriptional activities should be taken with a grain of salt. As of 2007, all studies demonstrating in vivo interaction between protein X and transcriptional components were performed with significant overexpression of both proteins and in the absence of viral infection.</text>
</comment>
<sequence length="154" mass="16600">MAARLCCQLDPARDVLCLRPVGAESRGRPVSGPLGSLSSSSPSAVPTDHGAHLSLRGLPVCAFSSAGPCALRFTSARRMETTVNAHQILPKILHKRTLGLSTMSTTDLEAYFKDCLFKDWEELGEEIRLKVFVLGGCRHKLVCAPAPCNFFTSA</sequence>
<feature type="chain" id="PRO_0000319910" description="Protein X">
    <location>
        <begin position="1"/>
        <end position="154"/>
    </location>
</feature>
<feature type="region of interest" description="Disordered" evidence="2">
    <location>
        <begin position="26"/>
        <end position="45"/>
    </location>
</feature>
<feature type="region of interest" description="Mitochondrial targeting sequence" evidence="1">
    <location>
        <begin position="68"/>
        <end position="117"/>
    </location>
</feature>
<feature type="compositionally biased region" description="Low complexity" evidence="2">
    <location>
        <begin position="31"/>
        <end position="43"/>
    </location>
</feature>
<proteinExistence type="inferred from homology"/>
<protein>
    <recommendedName>
        <fullName evidence="1">Protein X</fullName>
    </recommendedName>
    <alternativeName>
        <fullName evidence="1">HBx</fullName>
    </alternativeName>
    <alternativeName>
        <fullName evidence="1">Peptide X</fullName>
    </alternativeName>
    <alternativeName>
        <fullName evidence="1">pX</fullName>
    </alternativeName>
</protein>
<accession>Q9QMI3</accession>
<reference key="1">
    <citation type="journal article" date="1988" name="J. Gen. Virol.">
        <title>Typing hepatitis B virus by homology in nucleotide sequence: comparison of surface antigen subtypes.</title>
        <authorList>
            <person name="Okamoto H."/>
            <person name="Tsuda F."/>
            <person name="Sakugawa H."/>
            <person name="Sastrosoewignjo R.I."/>
            <person name="Imai M."/>
            <person name="Miyakawa Y."/>
            <person name="Mayumi M."/>
        </authorList>
    </citation>
    <scope>NUCLEOTIDE SEQUENCE [GENOMIC DNA]</scope>
</reference>
<reference key="2">
    <citation type="journal article" date="2004" name="J. Virol.">
        <title>The enigmatic X gene of hepatitis B virus.</title>
        <authorList>
            <person name="Bouchard M.J."/>
            <person name="Schneider R.J."/>
        </authorList>
    </citation>
    <scope>REVIEW</scope>
</reference>
<reference key="3">
    <citation type="journal article" date="2006" name="Cancer Sci.">
        <title>Molecular functions and biological roles of hepatitis B virus x protein.</title>
        <authorList>
            <person name="Tang H."/>
            <person name="Oishi N."/>
            <person name="Kaneko S."/>
            <person name="Murakami S."/>
        </authorList>
    </citation>
    <scope>REVIEW</scope>
</reference>
<organismHost>
    <name type="scientific">Homo sapiens</name>
    <name type="common">Human</name>
    <dbReference type="NCBI Taxonomy" id="9606"/>
</organismHost>
<organismHost>
    <name type="scientific">Pan troglodytes</name>
    <name type="common">Chimpanzee</name>
    <dbReference type="NCBI Taxonomy" id="9598"/>
</organismHost>